<accession>P59367</accession>
<dbReference type="SMR" id="P59367"/>
<dbReference type="ArachnoServer" id="AS000279">
    <property type="toxin name" value="GAMMA-ctenitoxin-Pn1a"/>
</dbReference>
<dbReference type="GO" id="GO:0005576">
    <property type="term" value="C:extracellular region"/>
    <property type="evidence" value="ECO:0007669"/>
    <property type="project" value="UniProtKB-SubCell"/>
</dbReference>
<dbReference type="GO" id="GO:0035792">
    <property type="term" value="C:host cell postsynaptic membrane"/>
    <property type="evidence" value="ECO:0007669"/>
    <property type="project" value="UniProtKB-KW"/>
</dbReference>
<dbReference type="GO" id="GO:0017080">
    <property type="term" value="F:sodium channel regulator activity"/>
    <property type="evidence" value="ECO:0007669"/>
    <property type="project" value="UniProtKB-KW"/>
</dbReference>
<dbReference type="GO" id="GO:0090729">
    <property type="term" value="F:toxin activity"/>
    <property type="evidence" value="ECO:0007669"/>
    <property type="project" value="UniProtKB-KW"/>
</dbReference>
<dbReference type="InterPro" id="IPR035285">
    <property type="entry name" value="CNTX"/>
</dbReference>
<dbReference type="Pfam" id="PF17492">
    <property type="entry name" value="D_CNTX"/>
    <property type="match status" value="1"/>
</dbReference>
<evidence type="ECO:0000255" key="1"/>
<evidence type="ECO:0000269" key="2">
    <source>
    </source>
</evidence>
<evidence type="ECO:0000269" key="3">
    <source>
    </source>
</evidence>
<evidence type="ECO:0000269" key="4">
    <source>
    </source>
</evidence>
<evidence type="ECO:0000269" key="5">
    <source>
    </source>
</evidence>
<evidence type="ECO:0000269" key="6">
    <source>
    </source>
</evidence>
<evidence type="ECO:0000303" key="7">
    <source>
    </source>
</evidence>
<evidence type="ECO:0000303" key="8">
    <source>
    </source>
</evidence>
<evidence type="ECO:0000303" key="9">
    <source>
    </source>
</evidence>
<evidence type="ECO:0000303" key="10">
    <source>
    </source>
</evidence>
<evidence type="ECO:0000303" key="11">
    <source>
    </source>
</evidence>
<evidence type="ECO:0000305" key="12"/>
<evidence type="ECO:0000305" key="13">
    <source>
    </source>
</evidence>
<keyword id="KW-0903">Direct protein sequencing</keyword>
<keyword id="KW-1015">Disulfide bond</keyword>
<keyword id="KW-0872">Ion channel impairing toxin</keyword>
<keyword id="KW-1028">Ionotropic glutamate receptor inhibitor</keyword>
<keyword id="KW-0960">Knottin</keyword>
<keyword id="KW-0528">Neurotoxin</keyword>
<keyword id="KW-0629">Postsynaptic neurotoxin</keyword>
<keyword id="KW-0964">Secreted</keyword>
<keyword id="KW-0732">Signal</keyword>
<keyword id="KW-0800">Toxin</keyword>
<keyword id="KW-0738">Voltage-gated sodium channel impairing toxin</keyword>
<proteinExistence type="evidence at protein level"/>
<sequence length="81" mass="9021">MKVAIVFLSLLVLAFASESIEENREEFPVEESARCADINGACKSDCDCCGDSVTCDCYWSDSCKCRESNFKIGMAIRKKFC</sequence>
<name>TX35C_PHONI</name>
<organism>
    <name type="scientific">Phoneutria nigriventer</name>
    <name type="common">Brazilian armed spider</name>
    <name type="synonym">Ctenus nigriventer</name>
    <dbReference type="NCBI Taxonomy" id="6918"/>
    <lineage>
        <taxon>Eukaryota</taxon>
        <taxon>Metazoa</taxon>
        <taxon>Ecdysozoa</taxon>
        <taxon>Arthropoda</taxon>
        <taxon>Chelicerata</taxon>
        <taxon>Arachnida</taxon>
        <taxon>Araneae</taxon>
        <taxon>Araneomorphae</taxon>
        <taxon>Entelegynae</taxon>
        <taxon>Lycosoidea</taxon>
        <taxon>Ctenidae</taxon>
        <taxon>Phoneutria</taxon>
    </lineage>
</organism>
<comment type="function">
    <text evidence="2 4 5 6">This insecticidal neurotoxin targets two types of channels/receptors. It reversibly inhibits the N-methyl-D-aspartate (NMDA)-subtype of ionotropic glutamate receptor (GRIN) (PubMed:10978749). It inhibits glutamate uptake from rat brain synaptosomes, and blocks GRIN in hippocampal slices (PubMed:10978749, PubMed:26802625). It also acts on sodium channels of both insects and mammals (PubMed:26747232). On sodium channel insects, it strongly slows down channel inactivation (EC(50)=212.5 nM) and causes an increase (105%) in peak amplitude (at 1 uM) of B.germanica sodium channel (Nav), whereas it inhibits all mammalien sodium channels tested with the following order of potency: Nav1.3/SCN3A (IC(50)=1.5 uM) &gt; Nav1.6/SCN8A &gt; Nav1.5/SCN5A &gt; Nav1.4/SCN4A &gt;= Nav1.2/SCN2A (PubMed:26747232). In vivo, it is highly toxic to house fly (Musca domestica), cockroach (Periplaneta americana), and cricket (Acheta domesticus) (PubMed:10978749). In different rat pain models (induced by PGE2, carrageenan or glutamate), it shows antinociceptive effect that may be related to an inhibitory activity on the glutamatergic system (PubMed:31467512).</text>
</comment>
<comment type="subcellular location">
    <subcellularLocation>
        <location evidence="2">Secreted</location>
    </subcellularLocation>
</comment>
<comment type="tissue specificity">
    <text evidence="13">Expressed by the venom gland.</text>
</comment>
<comment type="domain">
    <text evidence="12">The presence of a 'disulfide through disulfide knot' structurally defines this protein as a knottin.</text>
</comment>
<comment type="mass spectrometry" mass="5170.0" method="Electrospray" evidence="2"/>
<comment type="toxic dose">
    <text evidence="2">LD(50) is 9.3 ng/house fly.</text>
</comment>
<comment type="miscellaneous">
    <text evidence="5">Protects against glutamate-induced neuronal cell death in corticostriatal neurons from both wild-type mice and the Huntingtons disease mice model (BACHD) (PubMed:26802625). In addition, it also protects neurons from Abeta peptides, which are the main components of Alzheimer's disease amyloid plaques and are very toxic to neurons (PubMed:26802625).</text>
</comment>
<comment type="similarity">
    <text evidence="12">Belongs to the neurotoxin 03 (Tx2) family. 05 subfamily.</text>
</comment>
<protein>
    <recommendedName>
        <fullName evidence="11">GAMMA-ctenitoxin-Pn1a</fullName>
        <shortName evidence="11">GAMMA-CNTX-Pn1a</shortName>
    </recommendedName>
    <alternativeName>
        <fullName evidence="8">Insecticidal neurotoxin Tx4(5-5)</fullName>
        <shortName evidence="9">PnTx4(5-5)</shortName>
        <shortName evidence="10">PnTx4-5-5</shortName>
    </alternativeName>
    <alternativeName>
        <fullName evidence="7">Toxin Pn4A</fullName>
    </alternativeName>
</protein>
<feature type="signal peptide" evidence="1">
    <location>
        <begin position="1"/>
        <end position="16"/>
    </location>
</feature>
<feature type="propeptide" id="PRO_0000035507" evidence="2 3">
    <location>
        <begin position="17"/>
        <end position="34"/>
    </location>
</feature>
<feature type="chain" id="PRO_0000035508" description="GAMMA-ctenitoxin-Pn1a" evidence="2 3">
    <location>
        <begin position="35"/>
        <end position="81"/>
    </location>
</feature>
<feature type="disulfide bond" evidence="12">
    <location>
        <begin position="35"/>
        <end position="49"/>
    </location>
</feature>
<feature type="disulfide bond" evidence="12">
    <location>
        <begin position="42"/>
        <end position="55"/>
    </location>
</feature>
<feature type="disulfide bond" evidence="12">
    <location>
        <begin position="46"/>
        <end position="81"/>
    </location>
</feature>
<feature type="disulfide bond" evidence="12">
    <location>
        <begin position="48"/>
        <end position="65"/>
    </location>
</feature>
<feature type="disulfide bond" evidence="12">
    <location>
        <begin position="57"/>
        <end position="63"/>
    </location>
</feature>
<reference key="1">
    <citation type="journal article" date="2000" name="Toxicon">
        <title>Molecular cloning of cDNAs encoding insecticidal neurotoxic peptides from the spider Phoneutria nigriventer.</title>
        <authorList>
            <person name="Penaforte C.L."/>
            <person name="Prado V.F."/>
            <person name="Prado M.A.M."/>
            <person name="Romano-Silva M.A."/>
            <person name="Guimaraes P.E.M."/>
            <person name="De Marco L."/>
            <person name="Gomez M.V."/>
            <person name="Kalapothakis E."/>
        </authorList>
    </citation>
    <scope>NUCLEOTIDE SEQUENCE [MRNA]</scope>
    <source>
        <tissue>Venom gland</tissue>
    </source>
</reference>
<reference key="2">
    <citation type="journal article" date="2001" name="Toxicon">
        <title>Purification and amino acid sequence of a highly insecticidal toxin from the venom of the Brazilian spider Phoneutria nigriventer which inhibits NMDA-evoked currents in rat hippocampal neurones.</title>
        <authorList>
            <person name="de Figueiredo S.G."/>
            <person name="de Lima M.E."/>
            <person name="Nascimento Cordeiro M."/>
            <person name="Diniz C.R."/>
            <person name="Patten D."/>
            <person name="Halliwell R.F."/>
            <person name="Gilroy J."/>
            <person name="Richardson M."/>
        </authorList>
    </citation>
    <scope>PROTEIN SEQUENCE OF 35-81</scope>
    <scope>FUNCTION</scope>
    <scope>SUBCELLULAR LOCATION</scope>
    <scope>MASS SPECTROMETRY</scope>
    <scope>TOXIC DOSE</scope>
    <source>
        <tissue>Venom</tissue>
    </source>
</reference>
<reference key="3">
    <citation type="journal article" date="2006" name="Comp. Biochem. Physiol.">
        <title>Comparison of the partial proteomes of the venoms of Brazilian spiders of the genus Phoneutria.</title>
        <authorList>
            <person name="Richardson M."/>
            <person name="Pimenta A.M."/>
            <person name="Bemquerer M.P."/>
            <person name="Santoro M.M."/>
            <person name="Beirao P.S."/>
            <person name="Lima M.E."/>
            <person name="Figueiredo S.G."/>
            <person name="Bloch C. Jr."/>
            <person name="Vasconcelos E.A."/>
            <person name="Campos F.A."/>
            <person name="Gomes P.C."/>
            <person name="Cordeiro M.N."/>
        </authorList>
    </citation>
    <scope>PROTEIN SEQUENCE OF 35-81</scope>
    <source>
        <tissue>Venom</tissue>
    </source>
</reference>
<reference key="4">
    <citation type="journal article" date="2016" name="Biochimie">
        <title>Differential effects of the recombinant toxin PnTx4(5-5) from the spider Phoneutria nigriventer on mammalian and insect sodium channels.</title>
        <authorList>
            <person name="Paiva A.L."/>
            <person name="Matavel A."/>
            <person name="Peigneur S."/>
            <person name="Cordeiro M.N."/>
            <person name="Tytgat J."/>
            <person name="Diniz M.R."/>
            <person name="de Lima M.E."/>
        </authorList>
    </citation>
    <scope>FUNCTION</scope>
</reference>
<reference key="5">
    <citation type="journal article" date="2016" name="Toxicon">
        <title>The Phoneutria nigriventer spider toxin, PnTx4-5-5, promotes neuronal survival by blocking NMDA receptors.</title>
        <authorList>
            <person name="Silva F.R."/>
            <person name="Batista E.M."/>
            <person name="Gomez M.V."/>
            <person name="Kushmerick C."/>
            <person name="Da Silva J.F."/>
            <person name="Cordeiro M.N."/>
            <person name="Vieira L.B."/>
            <person name="Ribeiro F.M."/>
        </authorList>
    </citation>
    <scope>FUNCTION</scope>
    <source>
        <tissue>Venom</tissue>
    </source>
</reference>
<reference key="6">
    <citation type="journal article" date="2019" name="J. Venom. Anim. Toxins Incl. Trop. Dis.">
        <title>Antinociceptive effect of PnTx4(5-5), a peptide from Phoneutria nigriventer spider venom, in rat models and the involvement of glutamatergic system.</title>
        <authorList>
            <person name="Oliveira C.F.B."/>
            <person name="Alves D.P."/>
            <person name="Emerich B.L."/>
            <person name="de Figueiredo S.G."/>
            <person name="Cordeiro M.D.N."/>
            <person name="Borges M.H."/>
            <person name="Richardson M."/>
            <person name="Pimenta A.M.C."/>
            <person name="Duarte I.D.G."/>
            <person name="de Lima M.E."/>
        </authorList>
    </citation>
    <scope>FUNCTION</scope>
</reference>